<evidence type="ECO:0000255" key="1">
    <source>
        <dbReference type="HAMAP-Rule" id="MF_00531"/>
    </source>
</evidence>
<evidence type="ECO:0000305" key="2"/>
<sequence>MTRSLKKNPFVANNLLKKINKLNTKAEKEIIITWSRASTIIPIMVGHTIAIHNGKEHLPIYITDRMVGHKLGEFAPTLNFRGHAKSDNRSRR</sequence>
<gene>
    <name evidence="1" type="primary">rps19</name>
</gene>
<organism>
    <name type="scientific">Lactuca sativa</name>
    <name type="common">Garden lettuce</name>
    <dbReference type="NCBI Taxonomy" id="4236"/>
    <lineage>
        <taxon>Eukaryota</taxon>
        <taxon>Viridiplantae</taxon>
        <taxon>Streptophyta</taxon>
        <taxon>Embryophyta</taxon>
        <taxon>Tracheophyta</taxon>
        <taxon>Spermatophyta</taxon>
        <taxon>Magnoliopsida</taxon>
        <taxon>eudicotyledons</taxon>
        <taxon>Gunneridae</taxon>
        <taxon>Pentapetalae</taxon>
        <taxon>asterids</taxon>
        <taxon>campanulids</taxon>
        <taxon>Asterales</taxon>
        <taxon>Asteraceae</taxon>
        <taxon>Cichorioideae</taxon>
        <taxon>Cichorieae</taxon>
        <taxon>Lactucinae</taxon>
        <taxon>Lactuca</taxon>
    </lineage>
</organism>
<comment type="function">
    <text evidence="1">Protein S19 forms a complex with S13 that binds strongly to the 16S ribosomal RNA.</text>
</comment>
<comment type="subcellular location">
    <subcellularLocation>
        <location>Plastid</location>
        <location>Chloroplast</location>
    </subcellularLocation>
</comment>
<comment type="similarity">
    <text evidence="1">Belongs to the universal ribosomal protein uS19 family.</text>
</comment>
<keyword id="KW-0150">Chloroplast</keyword>
<keyword id="KW-0934">Plastid</keyword>
<keyword id="KW-0687">Ribonucleoprotein</keyword>
<keyword id="KW-0689">Ribosomal protein</keyword>
<keyword id="KW-0694">RNA-binding</keyword>
<keyword id="KW-0699">rRNA-binding</keyword>
<name>RR19_LACSA</name>
<dbReference type="EMBL" id="AP007232">
    <property type="protein sequence ID" value="BAE47636.1"/>
    <property type="molecule type" value="Genomic_DNA"/>
</dbReference>
<dbReference type="EMBL" id="DQ383816">
    <property type="protein sequence ID" value="ABD47273.1"/>
    <property type="molecule type" value="Genomic_DNA"/>
</dbReference>
<dbReference type="RefSeq" id="YP_398369.1">
    <property type="nucleotide sequence ID" value="NC_007578.1"/>
</dbReference>
<dbReference type="SMR" id="Q332T6"/>
<dbReference type="GeneID" id="3772793"/>
<dbReference type="KEGG" id="lsv:3772793"/>
<dbReference type="OrthoDB" id="2043at2759"/>
<dbReference type="GO" id="GO:0009507">
    <property type="term" value="C:chloroplast"/>
    <property type="evidence" value="ECO:0007669"/>
    <property type="project" value="UniProtKB-SubCell"/>
</dbReference>
<dbReference type="GO" id="GO:0015935">
    <property type="term" value="C:small ribosomal subunit"/>
    <property type="evidence" value="ECO:0007669"/>
    <property type="project" value="InterPro"/>
</dbReference>
<dbReference type="GO" id="GO:0019843">
    <property type="term" value="F:rRNA binding"/>
    <property type="evidence" value="ECO:0007669"/>
    <property type="project" value="UniProtKB-UniRule"/>
</dbReference>
<dbReference type="GO" id="GO:0003735">
    <property type="term" value="F:structural constituent of ribosome"/>
    <property type="evidence" value="ECO:0007669"/>
    <property type="project" value="InterPro"/>
</dbReference>
<dbReference type="GO" id="GO:0006412">
    <property type="term" value="P:translation"/>
    <property type="evidence" value="ECO:0007669"/>
    <property type="project" value="UniProtKB-UniRule"/>
</dbReference>
<dbReference type="FunFam" id="3.30.860.10:FF:000001">
    <property type="entry name" value="30S ribosomal protein S19"/>
    <property type="match status" value="1"/>
</dbReference>
<dbReference type="Gene3D" id="3.30.860.10">
    <property type="entry name" value="30s Ribosomal Protein S19, Chain A"/>
    <property type="match status" value="1"/>
</dbReference>
<dbReference type="HAMAP" id="MF_00531">
    <property type="entry name" value="Ribosomal_uS19"/>
    <property type="match status" value="1"/>
</dbReference>
<dbReference type="InterPro" id="IPR002222">
    <property type="entry name" value="Ribosomal_uS19"/>
</dbReference>
<dbReference type="InterPro" id="IPR005732">
    <property type="entry name" value="Ribosomal_uS19_bac-type"/>
</dbReference>
<dbReference type="InterPro" id="IPR020934">
    <property type="entry name" value="Ribosomal_uS19_CS"/>
</dbReference>
<dbReference type="InterPro" id="IPR023575">
    <property type="entry name" value="Ribosomal_uS19_SF"/>
</dbReference>
<dbReference type="NCBIfam" id="TIGR01050">
    <property type="entry name" value="rpsS_bact"/>
    <property type="match status" value="1"/>
</dbReference>
<dbReference type="PANTHER" id="PTHR11880">
    <property type="entry name" value="RIBOSOMAL PROTEIN S19P FAMILY MEMBER"/>
    <property type="match status" value="1"/>
</dbReference>
<dbReference type="PANTHER" id="PTHR11880:SF8">
    <property type="entry name" value="SMALL RIBOSOMAL SUBUNIT PROTEIN US19M"/>
    <property type="match status" value="1"/>
</dbReference>
<dbReference type="Pfam" id="PF00203">
    <property type="entry name" value="Ribosomal_S19"/>
    <property type="match status" value="1"/>
</dbReference>
<dbReference type="PIRSF" id="PIRSF002144">
    <property type="entry name" value="Ribosomal_S19"/>
    <property type="match status" value="1"/>
</dbReference>
<dbReference type="PRINTS" id="PR00975">
    <property type="entry name" value="RIBOSOMALS19"/>
</dbReference>
<dbReference type="SUPFAM" id="SSF54570">
    <property type="entry name" value="Ribosomal protein S19"/>
    <property type="match status" value="1"/>
</dbReference>
<dbReference type="PROSITE" id="PS00323">
    <property type="entry name" value="RIBOSOMAL_S19"/>
    <property type="match status" value="1"/>
</dbReference>
<feature type="chain" id="PRO_0000276911" description="Small ribosomal subunit protein uS19c">
    <location>
        <begin position="1"/>
        <end position="92"/>
    </location>
</feature>
<protein>
    <recommendedName>
        <fullName evidence="1">Small ribosomal subunit protein uS19c</fullName>
    </recommendedName>
    <alternativeName>
        <fullName evidence="2">30S ribosomal protein S19, chloroplastic</fullName>
    </alternativeName>
</protein>
<reference key="1">
    <citation type="journal article" date="2006" name="Transgenic Res.">
        <title>Efficient and stable transformation of Lactuca sativa L. cv. Cisco (lettuce) plastids.</title>
        <authorList>
            <person name="Kanamoto H."/>
            <person name="Yamashita A."/>
            <person name="Asao H."/>
            <person name="Okumura S."/>
            <person name="Takase H."/>
            <person name="Hattori M."/>
            <person name="Yokota A."/>
            <person name="Tomizawa K."/>
        </authorList>
    </citation>
    <scope>NUCLEOTIDE SEQUENCE [LARGE SCALE GENOMIC DNA]</scope>
    <source>
        <strain>cv. Cisco</strain>
    </source>
</reference>
<reference key="2">
    <citation type="submission" date="2006-01" db="EMBL/GenBank/DDBJ databases">
        <title>A comparison of the first two published chloroplast genomes in Asteraceae: Lactuca and Helianthus.</title>
        <authorList>
            <person name="Timme R.E."/>
            <person name="Kuehl J.V."/>
            <person name="Boore J.L."/>
            <person name="Jansen R.K."/>
        </authorList>
    </citation>
    <scope>NUCLEOTIDE SEQUENCE [LARGE SCALE GENOMIC DNA]</scope>
    <source>
        <strain>cv. Salinas</strain>
    </source>
</reference>
<accession>Q332T6</accession>
<proteinExistence type="inferred from homology"/>
<geneLocation type="chloroplast"/>